<dbReference type="EMBL" id="AE014291">
    <property type="protein sequence ID" value="AAN30296.1"/>
    <property type="molecule type" value="Genomic_DNA"/>
</dbReference>
<dbReference type="EMBL" id="CP002997">
    <property type="protein sequence ID" value="AEM18712.1"/>
    <property type="molecule type" value="Genomic_DNA"/>
</dbReference>
<dbReference type="RefSeq" id="WP_004691621.1">
    <property type="nucleotide sequence ID" value="NZ_KN046804.1"/>
</dbReference>
<dbReference type="KEGG" id="bms:BR1383"/>
<dbReference type="KEGG" id="bsi:BS1330_I1377"/>
<dbReference type="PATRIC" id="fig|204722.21.peg.860"/>
<dbReference type="HOGENOM" id="CLU_008142_4_2_5"/>
<dbReference type="PhylomeDB" id="Q8FZT8"/>
<dbReference type="Proteomes" id="UP000007104">
    <property type="component" value="Chromosome I"/>
</dbReference>
<dbReference type="GO" id="GO:0005886">
    <property type="term" value="C:plasma membrane"/>
    <property type="evidence" value="ECO:0007669"/>
    <property type="project" value="UniProtKB-SubCell"/>
</dbReference>
<dbReference type="GO" id="GO:0015079">
    <property type="term" value="F:potassium ion transmembrane transporter activity"/>
    <property type="evidence" value="ECO:0007669"/>
    <property type="project" value="UniProtKB-UniRule"/>
</dbReference>
<dbReference type="GO" id="GO:0015293">
    <property type="term" value="F:symporter activity"/>
    <property type="evidence" value="ECO:0007669"/>
    <property type="project" value="UniProtKB-UniRule"/>
</dbReference>
<dbReference type="HAMAP" id="MF_01522">
    <property type="entry name" value="Kup"/>
    <property type="match status" value="1"/>
</dbReference>
<dbReference type="InterPro" id="IPR003855">
    <property type="entry name" value="K+_transporter"/>
</dbReference>
<dbReference type="InterPro" id="IPR053952">
    <property type="entry name" value="K_trans_C"/>
</dbReference>
<dbReference type="InterPro" id="IPR053951">
    <property type="entry name" value="K_trans_N"/>
</dbReference>
<dbReference type="InterPro" id="IPR023051">
    <property type="entry name" value="Kup"/>
</dbReference>
<dbReference type="PANTHER" id="PTHR30540:SF79">
    <property type="entry name" value="LOW AFFINITY POTASSIUM TRANSPORT SYSTEM PROTEIN KUP"/>
    <property type="match status" value="1"/>
</dbReference>
<dbReference type="PANTHER" id="PTHR30540">
    <property type="entry name" value="OSMOTIC STRESS POTASSIUM TRANSPORTER"/>
    <property type="match status" value="1"/>
</dbReference>
<dbReference type="Pfam" id="PF02705">
    <property type="entry name" value="K_trans"/>
    <property type="match status" value="1"/>
</dbReference>
<dbReference type="Pfam" id="PF22776">
    <property type="entry name" value="K_trans_C"/>
    <property type="match status" value="1"/>
</dbReference>
<sequence length="651" mass="70487">MSGELNGNDTSAQAAVSAGSVLEGAAFADEGEQHNESMKTLVLGALGVVYGDIGTSPIYAFREALHAAATNGILARSDILGVVSLIFWALTLVVTVKYVLFVLRADNNGEGGILSLMALVRGALKGRPDLILGVGICGAALFFGDAVITPAISVLSAMEGLEIVAPNLTPFVVPATVVILVTLFSVQKLGTGRVAIVFGPIMALWFVALGASGLWHIFDDPTVMAALNPYYAVRFLTVSPAVAFVTVGAVFLAMTGAEALYADLGHFGRKPIVRAWLWIVFPCLLLNYFGQAAFILSHGEAAALPFFQMIPSFALWPMVLLATAATVIASQAVITGAYSVARQAVQLNILPRLEIQHTSEKLHGQIYIPRVNLLLGLAVVILVLGFEKSSNLAAAYGIAVTGNMLVTTVLLYIVMTRIWNWRVSRALPIILGFLVIDMLFFSANIIKVHEGGWASIGIATVLVLIMWTWVRGTRHLFQKTRKAEVPLDLIVEQMAKRPPTIVPGTAVFLTGDPKSAPTALMHSLKHYKVLHENNVILTVVTASKPWVASADRARVSQYNERFMLVTLTFGYMQQPNILRALGLCRRLGWKFDIMTTSFFLSRRSLKASVHSGMPLWQDKLFILLARTASDATEYFQIPTGRVVEIGTQVNI</sequence>
<reference key="1">
    <citation type="journal article" date="2002" name="Proc. Natl. Acad. Sci. U.S.A.">
        <title>The Brucella suis genome reveals fundamental similarities between animal and plant pathogens and symbionts.</title>
        <authorList>
            <person name="Paulsen I.T."/>
            <person name="Seshadri R."/>
            <person name="Nelson K.E."/>
            <person name="Eisen J.A."/>
            <person name="Heidelberg J.F."/>
            <person name="Read T.D."/>
            <person name="Dodson R.J."/>
            <person name="Umayam L.A."/>
            <person name="Brinkac L.M."/>
            <person name="Beanan M.J."/>
            <person name="Daugherty S.C."/>
            <person name="DeBoy R.T."/>
            <person name="Durkin A.S."/>
            <person name="Kolonay J.F."/>
            <person name="Madupu R."/>
            <person name="Nelson W.C."/>
            <person name="Ayodeji B."/>
            <person name="Kraul M."/>
            <person name="Shetty J."/>
            <person name="Malek J.A."/>
            <person name="Van Aken S.E."/>
            <person name="Riedmuller S."/>
            <person name="Tettelin H."/>
            <person name="Gill S.R."/>
            <person name="White O."/>
            <person name="Salzberg S.L."/>
            <person name="Hoover D.L."/>
            <person name="Lindler L.E."/>
            <person name="Halling S.M."/>
            <person name="Boyle S.M."/>
            <person name="Fraser C.M."/>
        </authorList>
    </citation>
    <scope>NUCLEOTIDE SEQUENCE [LARGE SCALE GENOMIC DNA]</scope>
    <source>
        <strain>1330</strain>
    </source>
</reference>
<reference key="2">
    <citation type="journal article" date="2011" name="J. Bacteriol.">
        <title>Revised genome sequence of Brucella suis 1330.</title>
        <authorList>
            <person name="Tae H."/>
            <person name="Shallom S."/>
            <person name="Settlage R."/>
            <person name="Preston D."/>
            <person name="Adams L.G."/>
            <person name="Garner H.R."/>
        </authorList>
    </citation>
    <scope>NUCLEOTIDE SEQUENCE [LARGE SCALE GENOMIC DNA]</scope>
    <source>
        <strain>1330</strain>
    </source>
</reference>
<name>KUP_BRUSU</name>
<evidence type="ECO:0000255" key="1">
    <source>
        <dbReference type="HAMAP-Rule" id="MF_01522"/>
    </source>
</evidence>
<organism>
    <name type="scientific">Brucella suis biovar 1 (strain 1330)</name>
    <dbReference type="NCBI Taxonomy" id="204722"/>
    <lineage>
        <taxon>Bacteria</taxon>
        <taxon>Pseudomonadati</taxon>
        <taxon>Pseudomonadota</taxon>
        <taxon>Alphaproteobacteria</taxon>
        <taxon>Hyphomicrobiales</taxon>
        <taxon>Brucellaceae</taxon>
        <taxon>Brucella/Ochrobactrum group</taxon>
        <taxon>Brucella</taxon>
    </lineage>
</organism>
<accession>Q8FZT8</accession>
<accession>G0KB66</accession>
<protein>
    <recommendedName>
        <fullName evidence="1">Probable potassium transport system protein Kup</fullName>
    </recommendedName>
</protein>
<comment type="function">
    <text evidence="1">Transport of potassium into the cell. Likely operates as a K(+):H(+) symporter.</text>
</comment>
<comment type="catalytic activity">
    <reaction evidence="1">
        <text>K(+)(in) + H(+)(in) = K(+)(out) + H(+)(out)</text>
        <dbReference type="Rhea" id="RHEA:28490"/>
        <dbReference type="ChEBI" id="CHEBI:15378"/>
        <dbReference type="ChEBI" id="CHEBI:29103"/>
    </reaction>
    <physiologicalReaction direction="right-to-left" evidence="1">
        <dbReference type="Rhea" id="RHEA:28492"/>
    </physiologicalReaction>
</comment>
<comment type="subcellular location">
    <subcellularLocation>
        <location evidence="1">Cell inner membrane</location>
        <topology evidence="1">Multi-pass membrane protein</topology>
    </subcellularLocation>
</comment>
<comment type="similarity">
    <text evidence="1">Belongs to the HAK/KUP transporter (TC 2.A.72) family.</text>
</comment>
<keyword id="KW-0997">Cell inner membrane</keyword>
<keyword id="KW-1003">Cell membrane</keyword>
<keyword id="KW-0406">Ion transport</keyword>
<keyword id="KW-0472">Membrane</keyword>
<keyword id="KW-0630">Potassium</keyword>
<keyword id="KW-0633">Potassium transport</keyword>
<keyword id="KW-0769">Symport</keyword>
<keyword id="KW-0812">Transmembrane</keyword>
<keyword id="KW-1133">Transmembrane helix</keyword>
<keyword id="KW-0813">Transport</keyword>
<proteinExistence type="inferred from homology"/>
<feature type="chain" id="PRO_0000209003" description="Probable potassium transport system protein Kup">
    <location>
        <begin position="1"/>
        <end position="651"/>
    </location>
</feature>
<feature type="transmembrane region" description="Helical" evidence="1">
    <location>
        <begin position="41"/>
        <end position="61"/>
    </location>
</feature>
<feature type="transmembrane region" description="Helical" evidence="1">
    <location>
        <begin position="82"/>
        <end position="102"/>
    </location>
</feature>
<feature type="transmembrane region" description="Helical" evidence="1">
    <location>
        <begin position="130"/>
        <end position="150"/>
    </location>
</feature>
<feature type="transmembrane region" description="Helical" evidence="1">
    <location>
        <begin position="163"/>
        <end position="183"/>
    </location>
</feature>
<feature type="transmembrane region" description="Helical" evidence="1">
    <location>
        <begin position="194"/>
        <end position="214"/>
    </location>
</feature>
<feature type="transmembrane region" description="Helical" evidence="1">
    <location>
        <begin position="235"/>
        <end position="255"/>
    </location>
</feature>
<feature type="transmembrane region" description="Helical" evidence="1">
    <location>
        <begin position="276"/>
        <end position="296"/>
    </location>
</feature>
<feature type="transmembrane region" description="Helical" evidence="1">
    <location>
        <begin position="309"/>
        <end position="329"/>
    </location>
</feature>
<feature type="transmembrane region" description="Helical" evidence="1">
    <location>
        <begin position="366"/>
        <end position="386"/>
    </location>
</feature>
<feature type="transmembrane region" description="Helical" evidence="1">
    <location>
        <begin position="395"/>
        <end position="415"/>
    </location>
</feature>
<feature type="transmembrane region" description="Helical" evidence="1">
    <location>
        <begin position="426"/>
        <end position="446"/>
    </location>
</feature>
<feature type="transmembrane region" description="Helical" evidence="1">
    <location>
        <begin position="450"/>
        <end position="470"/>
    </location>
</feature>
<gene>
    <name evidence="1" type="primary">kup</name>
    <name type="ordered locus">BR1383</name>
    <name type="ordered locus">BS1330_I1377</name>
</gene>